<accession>Q2YYP6</accession>
<reference key="1">
    <citation type="journal article" date="2007" name="PLoS ONE">
        <title>Molecular correlates of host specialization in Staphylococcus aureus.</title>
        <authorList>
            <person name="Herron-Olson L."/>
            <person name="Fitzgerald J.R."/>
            <person name="Musser J.M."/>
            <person name="Kapur V."/>
        </authorList>
    </citation>
    <scope>NUCLEOTIDE SEQUENCE [LARGE SCALE GENOMIC DNA]</scope>
    <source>
        <strain>bovine RF122 / ET3-1</strain>
    </source>
</reference>
<gene>
    <name evidence="1" type="primary">rplC</name>
    <name type="ordered locus">SAB2122c</name>
</gene>
<feature type="chain" id="PRO_0000241414" description="Large ribosomal subunit protein uL3">
    <location>
        <begin position="1"/>
        <end position="220"/>
    </location>
</feature>
<feature type="region of interest" description="Disordered" evidence="2">
    <location>
        <begin position="130"/>
        <end position="156"/>
    </location>
</feature>
<dbReference type="EMBL" id="AJ938182">
    <property type="protein sequence ID" value="CAI81811.1"/>
    <property type="molecule type" value="Genomic_DNA"/>
</dbReference>
<dbReference type="RefSeq" id="WP_000160212.1">
    <property type="nucleotide sequence ID" value="NC_007622.1"/>
</dbReference>
<dbReference type="PDB" id="4WCE">
    <property type="method" value="X-ray"/>
    <property type="resolution" value="3.53 A"/>
    <property type="chains" value="B=1-220"/>
</dbReference>
<dbReference type="PDB" id="6FXC">
    <property type="method" value="EM"/>
    <property type="resolution" value="6.76 A"/>
    <property type="chains" value="AD/BD=2-216"/>
</dbReference>
<dbReference type="PDBsum" id="4WCE"/>
<dbReference type="PDBsum" id="6FXC"/>
<dbReference type="EMDB" id="EMD-0243"/>
<dbReference type="EMDB" id="EMD-3637"/>
<dbReference type="SMR" id="Q2YYP6"/>
<dbReference type="GeneID" id="98346562"/>
<dbReference type="KEGG" id="sab:SAB2122c"/>
<dbReference type="HOGENOM" id="CLU_044142_4_1_9"/>
<dbReference type="GO" id="GO:0022625">
    <property type="term" value="C:cytosolic large ribosomal subunit"/>
    <property type="evidence" value="ECO:0007669"/>
    <property type="project" value="TreeGrafter"/>
</dbReference>
<dbReference type="GO" id="GO:0019843">
    <property type="term" value="F:rRNA binding"/>
    <property type="evidence" value="ECO:0007669"/>
    <property type="project" value="UniProtKB-UniRule"/>
</dbReference>
<dbReference type="GO" id="GO:0003735">
    <property type="term" value="F:structural constituent of ribosome"/>
    <property type="evidence" value="ECO:0007669"/>
    <property type="project" value="InterPro"/>
</dbReference>
<dbReference type="GO" id="GO:0006412">
    <property type="term" value="P:translation"/>
    <property type="evidence" value="ECO:0007669"/>
    <property type="project" value="UniProtKB-UniRule"/>
</dbReference>
<dbReference type="FunFam" id="2.40.30.10:FF:000004">
    <property type="entry name" value="50S ribosomal protein L3"/>
    <property type="match status" value="1"/>
</dbReference>
<dbReference type="FunFam" id="3.30.160.810:FF:000002">
    <property type="entry name" value="50S ribosomal protein L3"/>
    <property type="match status" value="1"/>
</dbReference>
<dbReference type="Gene3D" id="3.30.160.810">
    <property type="match status" value="1"/>
</dbReference>
<dbReference type="Gene3D" id="2.40.30.10">
    <property type="entry name" value="Translation factors"/>
    <property type="match status" value="1"/>
</dbReference>
<dbReference type="HAMAP" id="MF_01325_B">
    <property type="entry name" value="Ribosomal_uL3_B"/>
    <property type="match status" value="1"/>
</dbReference>
<dbReference type="InterPro" id="IPR000597">
    <property type="entry name" value="Ribosomal_uL3"/>
</dbReference>
<dbReference type="InterPro" id="IPR019927">
    <property type="entry name" value="Ribosomal_uL3_bac/org-type"/>
</dbReference>
<dbReference type="InterPro" id="IPR019926">
    <property type="entry name" value="Ribosomal_uL3_CS"/>
</dbReference>
<dbReference type="InterPro" id="IPR009000">
    <property type="entry name" value="Transl_B-barrel_sf"/>
</dbReference>
<dbReference type="NCBIfam" id="TIGR03625">
    <property type="entry name" value="L3_bact"/>
    <property type="match status" value="1"/>
</dbReference>
<dbReference type="PANTHER" id="PTHR11229">
    <property type="entry name" value="50S RIBOSOMAL PROTEIN L3"/>
    <property type="match status" value="1"/>
</dbReference>
<dbReference type="PANTHER" id="PTHR11229:SF16">
    <property type="entry name" value="LARGE RIBOSOMAL SUBUNIT PROTEIN UL3C"/>
    <property type="match status" value="1"/>
</dbReference>
<dbReference type="Pfam" id="PF00297">
    <property type="entry name" value="Ribosomal_L3"/>
    <property type="match status" value="1"/>
</dbReference>
<dbReference type="SUPFAM" id="SSF50447">
    <property type="entry name" value="Translation proteins"/>
    <property type="match status" value="1"/>
</dbReference>
<dbReference type="PROSITE" id="PS00474">
    <property type="entry name" value="RIBOSOMAL_L3"/>
    <property type="match status" value="1"/>
</dbReference>
<evidence type="ECO:0000255" key="1">
    <source>
        <dbReference type="HAMAP-Rule" id="MF_01325"/>
    </source>
</evidence>
<evidence type="ECO:0000256" key="2">
    <source>
        <dbReference type="SAM" id="MobiDB-lite"/>
    </source>
</evidence>
<evidence type="ECO:0000305" key="3"/>
<comment type="function">
    <text evidence="1">One of the primary rRNA binding proteins, it binds directly near the 3'-end of the 23S rRNA, where it nucleates assembly of the 50S subunit.</text>
</comment>
<comment type="subunit">
    <text evidence="1">Part of the 50S ribosomal subunit. Forms a cluster with proteins L14 and L19.</text>
</comment>
<comment type="similarity">
    <text evidence="1">Belongs to the universal ribosomal protein uL3 family.</text>
</comment>
<keyword id="KW-0002">3D-structure</keyword>
<keyword id="KW-0687">Ribonucleoprotein</keyword>
<keyword id="KW-0689">Ribosomal protein</keyword>
<keyword id="KW-0694">RNA-binding</keyword>
<keyword id="KW-0699">rRNA-binding</keyword>
<proteinExistence type="evidence at protein level"/>
<sequence>MTKGILGRKIGMTQVFGENGELIPVTVVEAKENVVLQKKTVEVDGYNAIQVGFEDKKAYKKDAKSNKYANKPAEGHAKKADAAPKRFIREFRNVDVDAYEVGQEVSVDTFVAGDVIDVTGVSKGKGFQGAIKRHGQSRGPMSHGSHFHRAPGSVGMASDASRVFKGQKMPGRMGGNTVTVQNLEVVQVDTENKVILVKGNVPGPKKGLVEIRTSIKKGNK</sequence>
<organism>
    <name type="scientific">Staphylococcus aureus (strain bovine RF122 / ET3-1)</name>
    <dbReference type="NCBI Taxonomy" id="273036"/>
    <lineage>
        <taxon>Bacteria</taxon>
        <taxon>Bacillati</taxon>
        <taxon>Bacillota</taxon>
        <taxon>Bacilli</taxon>
        <taxon>Bacillales</taxon>
        <taxon>Staphylococcaceae</taxon>
        <taxon>Staphylococcus</taxon>
    </lineage>
</organism>
<protein>
    <recommendedName>
        <fullName evidence="1">Large ribosomal subunit protein uL3</fullName>
    </recommendedName>
    <alternativeName>
        <fullName evidence="3">50S ribosomal protein L3</fullName>
    </alternativeName>
</protein>
<name>RL3_STAAB</name>